<reference key="1">
    <citation type="journal article" date="2009" name="J. Bacteriol.">
        <title>Genome sequences of three Agrobacterium biovars help elucidate the evolution of multichromosome genomes in bacteria.</title>
        <authorList>
            <person name="Slater S.C."/>
            <person name="Goldman B.S."/>
            <person name="Goodner B."/>
            <person name="Setubal J.C."/>
            <person name="Farrand S.K."/>
            <person name="Nester E.W."/>
            <person name="Burr T.J."/>
            <person name="Banta L."/>
            <person name="Dickerman A.W."/>
            <person name="Paulsen I."/>
            <person name="Otten L."/>
            <person name="Suen G."/>
            <person name="Welch R."/>
            <person name="Almeida N.F."/>
            <person name="Arnold F."/>
            <person name="Burton O.T."/>
            <person name="Du Z."/>
            <person name="Ewing A."/>
            <person name="Godsy E."/>
            <person name="Heisel S."/>
            <person name="Houmiel K.L."/>
            <person name="Jhaveri J."/>
            <person name="Lu J."/>
            <person name="Miller N.M."/>
            <person name="Norton S."/>
            <person name="Chen Q."/>
            <person name="Phoolcharoen W."/>
            <person name="Ohlin V."/>
            <person name="Ondrusek D."/>
            <person name="Pride N."/>
            <person name="Stricklin S.L."/>
            <person name="Sun J."/>
            <person name="Wheeler C."/>
            <person name="Wilson L."/>
            <person name="Zhu H."/>
            <person name="Wood D.W."/>
        </authorList>
    </citation>
    <scope>NUCLEOTIDE SEQUENCE [LARGE SCALE GENOMIC DNA]</scope>
    <source>
        <strain>K84 / ATCC BAA-868</strain>
    </source>
</reference>
<dbReference type="EC" id="4.2.1.-" evidence="1"/>
<dbReference type="EMBL" id="CP000629">
    <property type="protein sequence ID" value="ACM29822.1"/>
    <property type="molecule type" value="Genomic_DNA"/>
</dbReference>
<dbReference type="RefSeq" id="WP_012650095.1">
    <property type="nucleotide sequence ID" value="NC_011983.1"/>
</dbReference>
<dbReference type="SMR" id="B9JIT0"/>
<dbReference type="STRING" id="311403.Arad_8587"/>
<dbReference type="KEGG" id="ara:Arad_8587"/>
<dbReference type="eggNOG" id="COG4336">
    <property type="taxonomic scope" value="Bacteria"/>
</dbReference>
<dbReference type="HOGENOM" id="CLU_059759_0_0_5"/>
<dbReference type="Proteomes" id="UP000001600">
    <property type="component" value="Chromosome 2"/>
</dbReference>
<dbReference type="GO" id="GO:0016829">
    <property type="term" value="F:lyase activity"/>
    <property type="evidence" value="ECO:0007669"/>
    <property type="project" value="UniProtKB-KW"/>
</dbReference>
<dbReference type="FunFam" id="3.30.2040.10:FF:000001">
    <property type="entry name" value="D-glutamate cyclase, mitochondrial"/>
    <property type="match status" value="1"/>
</dbReference>
<dbReference type="Gene3D" id="3.40.1640.10">
    <property type="entry name" value="PSTPO5379-like"/>
    <property type="match status" value="1"/>
</dbReference>
<dbReference type="Gene3D" id="3.30.2040.10">
    <property type="entry name" value="PSTPO5379-like domain"/>
    <property type="match status" value="1"/>
</dbReference>
<dbReference type="HAMAP" id="MF_01830">
    <property type="entry name" value="Hydro_lyase"/>
    <property type="match status" value="1"/>
</dbReference>
<dbReference type="InterPro" id="IPR009906">
    <property type="entry name" value="D-Glu_cyclase"/>
</dbReference>
<dbReference type="InterPro" id="IPR038021">
    <property type="entry name" value="Putative_hydro-lyase"/>
</dbReference>
<dbReference type="InterPro" id="IPR016938">
    <property type="entry name" value="UPF0317"/>
</dbReference>
<dbReference type="NCBIfam" id="NF003969">
    <property type="entry name" value="PRK05463.1"/>
    <property type="match status" value="1"/>
</dbReference>
<dbReference type="PANTHER" id="PTHR32022">
    <property type="entry name" value="D-GLUTAMATE CYCLASE, MITOCHONDRIAL"/>
    <property type="match status" value="1"/>
</dbReference>
<dbReference type="PANTHER" id="PTHR32022:SF10">
    <property type="entry name" value="D-GLUTAMATE CYCLASE, MITOCHONDRIAL"/>
    <property type="match status" value="1"/>
</dbReference>
<dbReference type="Pfam" id="PF07286">
    <property type="entry name" value="D-Glu_cyclase"/>
    <property type="match status" value="1"/>
</dbReference>
<dbReference type="PIRSF" id="PIRSF029755">
    <property type="entry name" value="UCP029755"/>
    <property type="match status" value="1"/>
</dbReference>
<dbReference type="SUPFAM" id="SSF160920">
    <property type="entry name" value="PSTPO5379-like"/>
    <property type="match status" value="1"/>
</dbReference>
<name>Y8587_RHIR8</name>
<sequence length="268" mass="29004">MIALDHLRHVNVEAARTARARYRAGTVEPTSGIAPGFTQANMIVLPRDWAFDFLLYAQRNPRACPVLDVSDPGSHTTLLAPGADLRKDLPLYRVWRDGKLAEETTDATAAWGEHPDLVSFLIGCSFTFETPMVEAGIEIRHITDRSNVPMYLTNKACRPAGRLRGNMVVSMRPIPASRVADAATISGRFPAVHGAPVHVGAPEEIGIKDLAKPEFGDPVRIEPGEIPVFWACGVTPQAAVMASGVPFAITHAPGHMFITNIPDSAYHA</sequence>
<feature type="chain" id="PRO_0000379813" description="Putative hydro-lyase Arad_8587">
    <location>
        <begin position="1"/>
        <end position="268"/>
    </location>
</feature>
<accession>B9JIT0</accession>
<gene>
    <name type="ordered locus">Arad_8587</name>
</gene>
<keyword id="KW-0456">Lyase</keyword>
<evidence type="ECO:0000255" key="1">
    <source>
        <dbReference type="HAMAP-Rule" id="MF_01830"/>
    </source>
</evidence>
<proteinExistence type="inferred from homology"/>
<comment type="similarity">
    <text evidence="1">Belongs to the D-glutamate cyclase family.</text>
</comment>
<protein>
    <recommendedName>
        <fullName evidence="1">Putative hydro-lyase Arad_8587</fullName>
        <ecNumber evidence="1">4.2.1.-</ecNumber>
    </recommendedName>
</protein>
<organism>
    <name type="scientific">Rhizobium rhizogenes (strain K84 / ATCC BAA-868)</name>
    <name type="common">Agrobacterium radiobacter</name>
    <dbReference type="NCBI Taxonomy" id="311403"/>
    <lineage>
        <taxon>Bacteria</taxon>
        <taxon>Pseudomonadati</taxon>
        <taxon>Pseudomonadota</taxon>
        <taxon>Alphaproteobacteria</taxon>
        <taxon>Hyphomicrobiales</taxon>
        <taxon>Rhizobiaceae</taxon>
        <taxon>Rhizobium/Agrobacterium group</taxon>
        <taxon>Rhizobium</taxon>
    </lineage>
</organism>